<evidence type="ECO:0000255" key="1">
    <source>
        <dbReference type="PROSITE-ProRule" id="PRU01035"/>
    </source>
</evidence>
<evidence type="ECO:0000255" key="2">
    <source>
        <dbReference type="PROSITE-ProRule" id="PRU10092"/>
    </source>
</evidence>
<evidence type="ECO:0000255" key="3">
    <source>
        <dbReference type="PROSITE-ProRule" id="PRU10093"/>
    </source>
</evidence>
<evidence type="ECO:0000256" key="4">
    <source>
        <dbReference type="SAM" id="MobiDB-lite"/>
    </source>
</evidence>
<evidence type="ECO:0000269" key="5">
    <source>
    </source>
</evidence>
<evidence type="ECO:0000269" key="6">
    <source>
    </source>
</evidence>
<evidence type="ECO:0000269" key="7">
    <source>
    </source>
</evidence>
<evidence type="ECO:0000269" key="8">
    <source>
    </source>
</evidence>
<evidence type="ECO:0000269" key="9">
    <source>
    </source>
</evidence>
<evidence type="ECO:0000303" key="10">
    <source>
    </source>
</evidence>
<evidence type="ECO:0000303" key="11">
    <source ref="4"/>
</evidence>
<evidence type="ECO:0000305" key="12"/>
<evidence type="ECO:0000305" key="13">
    <source>
    </source>
</evidence>
<evidence type="ECO:0000305" key="14">
    <source>
    </source>
</evidence>
<organism>
    <name type="scientific">Drosophila melanogaster</name>
    <name type="common">Fruit fly</name>
    <dbReference type="NCBI Taxonomy" id="7227"/>
    <lineage>
        <taxon>Eukaryota</taxon>
        <taxon>Metazoa</taxon>
        <taxon>Ecdysozoa</taxon>
        <taxon>Arthropoda</taxon>
        <taxon>Hexapoda</taxon>
        <taxon>Insecta</taxon>
        <taxon>Pterygota</taxon>
        <taxon>Neoptera</taxon>
        <taxon>Endopterygota</taxon>
        <taxon>Diptera</taxon>
        <taxon>Brachycera</taxon>
        <taxon>Muscomorpha</taxon>
        <taxon>Ephydroidea</taxon>
        <taxon>Drosophilidae</taxon>
        <taxon>Drosophila</taxon>
        <taxon>Sophophora</taxon>
    </lineage>
</organism>
<protein>
    <recommendedName>
        <fullName>Ubiquitin carboxyl-terminal hydrolase 36</fullName>
        <ecNumber>3.4.19.12</ecNumber>
    </recommendedName>
    <alternativeName>
        <fullName>Deubiquitinating enzyme 36</fullName>
    </alternativeName>
    <alternativeName>
        <fullName>Protein scrawny</fullName>
    </alternativeName>
    <alternativeName>
        <fullName>Ubiquitin thioesterase 36</fullName>
    </alternativeName>
    <alternativeName>
        <fullName>Ubiquitin-specific-processing protease 36</fullName>
    </alternativeName>
</protein>
<feature type="chain" id="PRO_0000378498" description="Ubiquitin carboxyl-terminal hydrolase 36">
    <location>
        <begin position="1"/>
        <end position="1038"/>
    </location>
</feature>
<feature type="domain" description="USP" evidence="1">
    <location>
        <begin position="172"/>
        <end position="480"/>
    </location>
</feature>
<feature type="region of interest" description="Disordered" evidence="4">
    <location>
        <begin position="22"/>
        <end position="44"/>
    </location>
</feature>
<feature type="region of interest" description="Disordered" evidence="4">
    <location>
        <begin position="107"/>
        <end position="148"/>
    </location>
</feature>
<feature type="region of interest" description="Disordered" evidence="4">
    <location>
        <begin position="487"/>
        <end position="794"/>
    </location>
</feature>
<feature type="region of interest" description="Disordered" evidence="4">
    <location>
        <begin position="818"/>
        <end position="881"/>
    </location>
</feature>
<feature type="region of interest" description="Disordered" evidence="4">
    <location>
        <begin position="912"/>
        <end position="985"/>
    </location>
</feature>
<feature type="region of interest" description="Disordered" evidence="4">
    <location>
        <begin position="1000"/>
        <end position="1038"/>
    </location>
</feature>
<feature type="compositionally biased region" description="Polar residues" evidence="4">
    <location>
        <begin position="23"/>
        <end position="44"/>
    </location>
</feature>
<feature type="compositionally biased region" description="Low complexity" evidence="4">
    <location>
        <begin position="502"/>
        <end position="517"/>
    </location>
</feature>
<feature type="compositionally biased region" description="Low complexity" evidence="4">
    <location>
        <begin position="546"/>
        <end position="559"/>
    </location>
</feature>
<feature type="compositionally biased region" description="Low complexity" evidence="4">
    <location>
        <begin position="587"/>
        <end position="606"/>
    </location>
</feature>
<feature type="compositionally biased region" description="Polar residues" evidence="4">
    <location>
        <begin position="629"/>
        <end position="641"/>
    </location>
</feature>
<feature type="compositionally biased region" description="Polar residues" evidence="4">
    <location>
        <begin position="703"/>
        <end position="728"/>
    </location>
</feature>
<feature type="compositionally biased region" description="Basic and acidic residues" evidence="4">
    <location>
        <begin position="729"/>
        <end position="746"/>
    </location>
</feature>
<feature type="compositionally biased region" description="Acidic residues" evidence="4">
    <location>
        <begin position="747"/>
        <end position="756"/>
    </location>
</feature>
<feature type="compositionally biased region" description="Low complexity" evidence="4">
    <location>
        <begin position="766"/>
        <end position="776"/>
    </location>
</feature>
<feature type="compositionally biased region" description="Pro residues" evidence="4">
    <location>
        <begin position="777"/>
        <end position="786"/>
    </location>
</feature>
<feature type="compositionally biased region" description="Polar residues" evidence="4">
    <location>
        <begin position="832"/>
        <end position="844"/>
    </location>
</feature>
<feature type="compositionally biased region" description="Polar residues" evidence="4">
    <location>
        <begin position="859"/>
        <end position="881"/>
    </location>
</feature>
<feature type="compositionally biased region" description="Basic and acidic residues" evidence="4">
    <location>
        <begin position="912"/>
        <end position="923"/>
    </location>
</feature>
<feature type="compositionally biased region" description="Low complexity" evidence="4">
    <location>
        <begin position="942"/>
        <end position="953"/>
    </location>
</feature>
<feature type="active site" description="Nucleophile" evidence="1 13 14">
    <location>
        <position position="181"/>
    </location>
</feature>
<feature type="active site" description="Proton acceptor" evidence="2 3 14">
    <location>
        <position position="439"/>
    </location>
</feature>
<feature type="modified residue" description="Phosphoserine" evidence="5">
    <location>
        <position position="513"/>
    </location>
</feature>
<feature type="modified residue" description="Phosphoserine" evidence="5">
    <location>
        <position position="515"/>
    </location>
</feature>
<feature type="modified residue" description="Phosphothreonine" evidence="5">
    <location>
        <position position="658"/>
    </location>
</feature>
<feature type="modified residue" description="Phosphothreonine" evidence="5">
    <location>
        <position position="662"/>
    </location>
</feature>
<feature type="modified residue" description="Phosphoserine" evidence="5">
    <location>
        <position position="672"/>
    </location>
</feature>
<feature type="modified residue" description="Phosphoserine" evidence="5">
    <location>
        <position position="674"/>
    </location>
</feature>
<feature type="modified residue" description="Phosphoserine" evidence="5">
    <location>
        <position position="747"/>
    </location>
</feature>
<feature type="modified residue" description="Phosphoserine" evidence="5">
    <location>
        <position position="779"/>
    </location>
</feature>
<feature type="modified residue" description="Phosphothreonine" evidence="5">
    <location>
        <position position="782"/>
    </location>
</feature>
<feature type="modified residue" description="Phosphoserine" evidence="5">
    <location>
        <position position="785"/>
    </location>
</feature>
<feature type="modified residue" description="Phosphoserine" evidence="5">
    <location>
        <position position="819"/>
    </location>
</feature>
<feature type="modified residue" description="Phosphothreonine" evidence="5">
    <location>
        <position position="825"/>
    </location>
</feature>
<feature type="modified residue" description="Phosphoserine" evidence="5">
    <location>
        <position position="843"/>
    </location>
</feature>
<feature type="modified residue" description="Phosphothreonine" evidence="5">
    <location>
        <position position="846"/>
    </location>
</feature>
<feature type="splice variant" id="VSP_037590" description="In isoform C and isoform I." evidence="11">
    <location>
        <begin position="1"/>
        <end position="90"/>
    </location>
</feature>
<feature type="splice variant" id="VSP_037591" description="In isoform B and isoform J." evidence="10">
    <location>
        <begin position="1"/>
        <end position="70"/>
    </location>
</feature>
<feature type="splice variant" id="VSP_037592" description="In isoform B and isoform J." evidence="10">
    <original>ESVLENLKSKYIVIKPGNPGAINGFSGKNNTGKLVGANGH</original>
    <variation>MTVIMVDGFALWLLYKLFLSPCCLLLWHVLKLSTVLFTFA</variation>
    <location>
        <begin position="71"/>
        <end position="110"/>
    </location>
</feature>
<feature type="splice variant" id="VSP_037593" description="In isoform C and isoform I." evidence="11">
    <original>AINGFSGKNNTGKLVGANGH</original>
    <variation>MLHSPVPRYNKCVPFPTLRT</variation>
    <location>
        <begin position="91"/>
        <end position="110"/>
    </location>
</feature>
<feature type="splice variant" id="VSP_054032" description="In isoform G, isoform I and isoform J." evidence="12">
    <original>ELLVDAREQRQRDIDDDEENEMDRGRQRKVKSGSAKGNNASNSTPGYNPFQEYEGQKRWNKNGGGGGFPRFYNQNYRQNFQQRNKFKFNRFGGPGSAKFQQQRALQRHLSAGGGFSRRQPSAQQQQQT</original>
    <variation>ETFELVCAKRIAGHGSVEGSDIVEGSVAVDAAVTSGSDSKDVVVIAVAVTDTTADAPDPDRLTDGR</variation>
    <location>
        <begin position="911"/>
        <end position="1038"/>
    </location>
</feature>
<feature type="mutagenesis site" description="Loss of H2B deubiquitination. Loss of 'K-48'- and 'K-63'-linked polyubiquitin chain hydrolysis; when associated with N-369." evidence="6 7">
    <original>C</original>
    <variation>S</variation>
    <location>
        <position position="181"/>
    </location>
</feature>
<feature type="mutagenesis site" description="Loss of 'K-48'- and 'K-63'-linked polyubiquitin chain hydrolysis; when associated with S-181." evidence="7">
    <original>H</original>
    <variation>N</variation>
    <location>
        <position position="439"/>
    </location>
</feature>
<feature type="sequence conflict" description="In Ref. 4; AAQ22589." evidence="12" ref="4">
    <original>A</original>
    <variation>T</variation>
    <location>
        <position position="115"/>
    </location>
</feature>
<feature type="sequence conflict" description="In Ref. 4; AAQ22589/AAO42671." evidence="12" ref="4">
    <original>N</original>
    <variation>D</variation>
    <location>
        <position position="642"/>
    </location>
</feature>
<feature type="sequence conflict" description="In Ref. 4; AAQ22589." evidence="12" ref="4">
    <original>P</original>
    <variation>T</variation>
    <location>
        <position position="766"/>
    </location>
</feature>
<keyword id="KW-0025">Alternative splicing</keyword>
<keyword id="KW-0963">Cytoplasm</keyword>
<keyword id="KW-0378">Hydrolase</keyword>
<keyword id="KW-0539">Nucleus</keyword>
<keyword id="KW-0597">Phosphoprotein</keyword>
<keyword id="KW-0645">Protease</keyword>
<keyword id="KW-1185">Reference proteome</keyword>
<keyword id="KW-0788">Thiol protease</keyword>
<keyword id="KW-0833">Ubl conjugation pathway</keyword>
<reference key="1">
    <citation type="journal article" date="2000" name="Science">
        <title>The genome sequence of Drosophila melanogaster.</title>
        <authorList>
            <person name="Adams M.D."/>
            <person name="Celniker S.E."/>
            <person name="Holt R.A."/>
            <person name="Evans C.A."/>
            <person name="Gocayne J.D."/>
            <person name="Amanatides P.G."/>
            <person name="Scherer S.E."/>
            <person name="Li P.W."/>
            <person name="Hoskins R.A."/>
            <person name="Galle R.F."/>
            <person name="George R.A."/>
            <person name="Lewis S.E."/>
            <person name="Richards S."/>
            <person name="Ashburner M."/>
            <person name="Henderson S.N."/>
            <person name="Sutton G.G."/>
            <person name="Wortman J.R."/>
            <person name="Yandell M.D."/>
            <person name="Zhang Q."/>
            <person name="Chen L.X."/>
            <person name="Brandon R.C."/>
            <person name="Rogers Y.-H.C."/>
            <person name="Blazej R.G."/>
            <person name="Champe M."/>
            <person name="Pfeiffer B.D."/>
            <person name="Wan K.H."/>
            <person name="Doyle C."/>
            <person name="Baxter E.G."/>
            <person name="Helt G."/>
            <person name="Nelson C.R."/>
            <person name="Miklos G.L.G."/>
            <person name="Abril J.F."/>
            <person name="Agbayani A."/>
            <person name="An H.-J."/>
            <person name="Andrews-Pfannkoch C."/>
            <person name="Baldwin D."/>
            <person name="Ballew R.M."/>
            <person name="Basu A."/>
            <person name="Baxendale J."/>
            <person name="Bayraktaroglu L."/>
            <person name="Beasley E.M."/>
            <person name="Beeson K.Y."/>
            <person name="Benos P.V."/>
            <person name="Berman B.P."/>
            <person name="Bhandari D."/>
            <person name="Bolshakov S."/>
            <person name="Borkova D."/>
            <person name="Botchan M.R."/>
            <person name="Bouck J."/>
            <person name="Brokstein P."/>
            <person name="Brottier P."/>
            <person name="Burtis K.C."/>
            <person name="Busam D.A."/>
            <person name="Butler H."/>
            <person name="Cadieu E."/>
            <person name="Center A."/>
            <person name="Chandra I."/>
            <person name="Cherry J.M."/>
            <person name="Cawley S."/>
            <person name="Dahlke C."/>
            <person name="Davenport L.B."/>
            <person name="Davies P."/>
            <person name="de Pablos B."/>
            <person name="Delcher A."/>
            <person name="Deng Z."/>
            <person name="Mays A.D."/>
            <person name="Dew I."/>
            <person name="Dietz S.M."/>
            <person name="Dodson K."/>
            <person name="Doup L.E."/>
            <person name="Downes M."/>
            <person name="Dugan-Rocha S."/>
            <person name="Dunkov B.C."/>
            <person name="Dunn P."/>
            <person name="Durbin K.J."/>
            <person name="Evangelista C.C."/>
            <person name="Ferraz C."/>
            <person name="Ferriera S."/>
            <person name="Fleischmann W."/>
            <person name="Fosler C."/>
            <person name="Gabrielian A.E."/>
            <person name="Garg N.S."/>
            <person name="Gelbart W.M."/>
            <person name="Glasser K."/>
            <person name="Glodek A."/>
            <person name="Gong F."/>
            <person name="Gorrell J.H."/>
            <person name="Gu Z."/>
            <person name="Guan P."/>
            <person name="Harris M."/>
            <person name="Harris N.L."/>
            <person name="Harvey D.A."/>
            <person name="Heiman T.J."/>
            <person name="Hernandez J.R."/>
            <person name="Houck J."/>
            <person name="Hostin D."/>
            <person name="Houston K.A."/>
            <person name="Howland T.J."/>
            <person name="Wei M.-H."/>
            <person name="Ibegwam C."/>
            <person name="Jalali M."/>
            <person name="Kalush F."/>
            <person name="Karpen G.H."/>
            <person name="Ke Z."/>
            <person name="Kennison J.A."/>
            <person name="Ketchum K.A."/>
            <person name="Kimmel B.E."/>
            <person name="Kodira C.D."/>
            <person name="Kraft C.L."/>
            <person name="Kravitz S."/>
            <person name="Kulp D."/>
            <person name="Lai Z."/>
            <person name="Lasko P."/>
            <person name="Lei Y."/>
            <person name="Levitsky A.A."/>
            <person name="Li J.H."/>
            <person name="Li Z."/>
            <person name="Liang Y."/>
            <person name="Lin X."/>
            <person name="Liu X."/>
            <person name="Mattei B."/>
            <person name="McIntosh T.C."/>
            <person name="McLeod M.P."/>
            <person name="McPherson D."/>
            <person name="Merkulov G."/>
            <person name="Milshina N.V."/>
            <person name="Mobarry C."/>
            <person name="Morris J."/>
            <person name="Moshrefi A."/>
            <person name="Mount S.M."/>
            <person name="Moy M."/>
            <person name="Murphy B."/>
            <person name="Murphy L."/>
            <person name="Muzny D.M."/>
            <person name="Nelson D.L."/>
            <person name="Nelson D.R."/>
            <person name="Nelson K.A."/>
            <person name="Nixon K."/>
            <person name="Nusskern D.R."/>
            <person name="Pacleb J.M."/>
            <person name="Palazzolo M."/>
            <person name="Pittman G.S."/>
            <person name="Pan S."/>
            <person name="Pollard J."/>
            <person name="Puri V."/>
            <person name="Reese M.G."/>
            <person name="Reinert K."/>
            <person name="Remington K."/>
            <person name="Saunders R.D.C."/>
            <person name="Scheeler F."/>
            <person name="Shen H."/>
            <person name="Shue B.C."/>
            <person name="Siden-Kiamos I."/>
            <person name="Simpson M."/>
            <person name="Skupski M.P."/>
            <person name="Smith T.J."/>
            <person name="Spier E."/>
            <person name="Spradling A.C."/>
            <person name="Stapleton M."/>
            <person name="Strong R."/>
            <person name="Sun E."/>
            <person name="Svirskas R."/>
            <person name="Tector C."/>
            <person name="Turner R."/>
            <person name="Venter E."/>
            <person name="Wang A.H."/>
            <person name="Wang X."/>
            <person name="Wang Z.-Y."/>
            <person name="Wassarman D.A."/>
            <person name="Weinstock G.M."/>
            <person name="Weissenbach J."/>
            <person name="Williams S.M."/>
            <person name="Woodage T."/>
            <person name="Worley K.C."/>
            <person name="Wu D."/>
            <person name="Yang S."/>
            <person name="Yao Q.A."/>
            <person name="Ye J."/>
            <person name="Yeh R.-F."/>
            <person name="Zaveri J.S."/>
            <person name="Zhan M."/>
            <person name="Zhang G."/>
            <person name="Zhao Q."/>
            <person name="Zheng L."/>
            <person name="Zheng X.H."/>
            <person name="Zhong F.N."/>
            <person name="Zhong W."/>
            <person name="Zhou X."/>
            <person name="Zhu S.C."/>
            <person name="Zhu X."/>
            <person name="Smith H.O."/>
            <person name="Gibbs R.A."/>
            <person name="Myers E.W."/>
            <person name="Rubin G.M."/>
            <person name="Venter J.C."/>
        </authorList>
    </citation>
    <scope>NUCLEOTIDE SEQUENCE [LARGE SCALE GENOMIC DNA]</scope>
    <source>
        <strain>Berkeley</strain>
    </source>
</reference>
<reference key="2">
    <citation type="journal article" date="2002" name="Genome Biol.">
        <title>Annotation of the Drosophila melanogaster euchromatic genome: a systematic review.</title>
        <authorList>
            <person name="Misra S."/>
            <person name="Crosby M.A."/>
            <person name="Mungall C.J."/>
            <person name="Matthews B.B."/>
            <person name="Campbell K.S."/>
            <person name="Hradecky P."/>
            <person name="Huang Y."/>
            <person name="Kaminker J.S."/>
            <person name="Millburn G.H."/>
            <person name="Prochnik S.E."/>
            <person name="Smith C.D."/>
            <person name="Tupy J.L."/>
            <person name="Whitfield E.J."/>
            <person name="Bayraktaroglu L."/>
            <person name="Berman B.P."/>
            <person name="Bettencourt B.R."/>
            <person name="Celniker S.E."/>
            <person name="de Grey A.D.N.J."/>
            <person name="Drysdale R.A."/>
            <person name="Harris N.L."/>
            <person name="Richter J."/>
            <person name="Russo S."/>
            <person name="Schroeder A.J."/>
            <person name="Shu S.Q."/>
            <person name="Stapleton M."/>
            <person name="Yamada C."/>
            <person name="Ashburner M."/>
            <person name="Gelbart W.M."/>
            <person name="Rubin G.M."/>
            <person name="Lewis S.E."/>
        </authorList>
    </citation>
    <scope>GENOME REANNOTATION</scope>
    <scope>ALTERNATIVE SPLICING</scope>
    <source>
        <strain>Berkeley</strain>
    </source>
</reference>
<reference key="3">
    <citation type="journal article" date="2002" name="Genome Biol.">
        <title>A Drosophila full-length cDNA resource.</title>
        <authorList>
            <person name="Stapleton M."/>
            <person name="Carlson J.W."/>
            <person name="Brokstein P."/>
            <person name="Yu C."/>
            <person name="Champe M."/>
            <person name="George R.A."/>
            <person name="Guarin H."/>
            <person name="Kronmiller B."/>
            <person name="Pacleb J.M."/>
            <person name="Park S."/>
            <person name="Wan K.H."/>
            <person name="Rubin G.M."/>
            <person name="Celniker S.E."/>
        </authorList>
    </citation>
    <scope>NUCLEOTIDE SEQUENCE [LARGE SCALE MRNA] (ISOFORM B)</scope>
    <source>
        <strain>Berkeley</strain>
        <tissue>Embryo</tissue>
    </source>
</reference>
<reference key="4">
    <citation type="submission" date="2008-10" db="EMBL/GenBank/DDBJ databases">
        <authorList>
            <person name="Stapleton M."/>
            <person name="Brokstein P."/>
            <person name="Hong L."/>
            <person name="Agbayani A."/>
            <person name="Booth B."/>
            <person name="Carlson J.W."/>
            <person name="Champe M."/>
            <person name="Chavez C."/>
            <person name="Dorsett V."/>
            <person name="Dresnek D."/>
            <person name="Farfan D."/>
            <person name="Frise E."/>
            <person name="George R.A."/>
            <person name="Gonzalez M."/>
            <person name="Guarin H."/>
            <person name="Kronmiller B."/>
            <person name="Li P.W."/>
            <person name="Liao G."/>
            <person name="Miranda A."/>
            <person name="Mungall C.J."/>
            <person name="Nunoo J."/>
            <person name="Pacleb J.M."/>
            <person name="Paragas V."/>
            <person name="Park S."/>
            <person name="Patel S."/>
            <person name="Phouanenavong S."/>
            <person name="Wan K.H."/>
            <person name="Yu C."/>
            <person name="Lewis S.E."/>
            <person name="Rubin G.M."/>
            <person name="Celniker S.E."/>
        </authorList>
    </citation>
    <scope>NUCLEOTIDE SEQUENCE [LARGE SCALE MRNA] (ISOFORMS C AND D)</scope>
    <source>
        <strain>Berkeley</strain>
        <tissue>Testis</tissue>
    </source>
</reference>
<reference key="5">
    <citation type="journal article" date="2008" name="J. Proteome Res.">
        <title>Phosphoproteome analysis of Drosophila melanogaster embryos.</title>
        <authorList>
            <person name="Zhai B."/>
            <person name="Villen J."/>
            <person name="Beausoleil S.A."/>
            <person name="Mintseris J."/>
            <person name="Gygi S.P."/>
        </authorList>
    </citation>
    <scope>PHOSPHORYLATION [LARGE SCALE ANALYSIS] AT SER-513; SER-515; THR-658; THR-662; SER-672; SER-674; SER-747; SER-779; THR-782; SER-785; SER-819; THR-825; SER-843 AND THR-846</scope>
    <scope>IDENTIFICATION BY MASS SPECTROMETRY</scope>
    <source>
        <tissue>Embryo</tissue>
    </source>
</reference>
<reference key="6">
    <citation type="journal article" date="2009" name="Cell Host Microbe">
        <title>The Drosophila ubiquitin-specific protease dUSP36/Scny targets IMD to prevent constitutive immune signaling.</title>
        <authorList>
            <person name="Thevenon D."/>
            <person name="Engel E."/>
            <person name="Avet-Rochex A."/>
            <person name="Gottar M."/>
            <person name="Bergeret E."/>
            <person name="Tricoire H."/>
            <person name="Benaud C."/>
            <person name="Baudier J."/>
            <person name="Taillebourg E."/>
            <person name="Fauvarque M.O."/>
        </authorList>
    </citation>
    <scope>FUNCTION</scope>
    <scope>INTERACTION WITH IMD</scope>
    <scope>SUBCELLULAR LOCATION</scope>
    <scope>DISRUPTION PHENOTYPE</scope>
    <scope>MUTAGENESIS OF CYS-181 AND HIS-439</scope>
</reference>
<reference key="7">
    <citation type="journal article" date="2009" name="Science">
        <title>Drosophila stem cells share a common requirement for the histone H2B ubiquitin protease scrawny.</title>
        <authorList>
            <person name="Buszczak M."/>
            <person name="Paterno S."/>
            <person name="Spradling A.C."/>
        </authorList>
    </citation>
    <scope>FUNCTION</scope>
    <scope>INTERACTION WITH ATMS</scope>
    <scope>SUBCELLULAR LOCATION</scope>
    <scope>MUTAGENESIS OF CYS-181</scope>
</reference>
<reference key="8">
    <citation type="journal article" date="2012" name="Autophagy">
        <title>The deubiquitinating enzyme USP36 controls selective autophagy activation by ubiquitinated proteins.</title>
        <authorList>
            <person name="Taillebourg E."/>
            <person name="Gregoire I."/>
            <person name="Viargues P."/>
            <person name="Jacomin A.C."/>
            <person name="Thevenon D."/>
            <person name="Faure M."/>
            <person name="Fauvarque M.O."/>
        </authorList>
    </citation>
    <scope>FUNCTION</scope>
    <scope>DISRUPTION PHENOTYPE</scope>
</reference>
<reference key="9">
    <citation type="journal article" date="2014" name="Cell Commun. Signal.">
        <title>Identifying USPs regulating immune signals in Drosophila: USP2 deubiquitinates Imd and promotes its degradation by interacting with the proteasome.</title>
        <authorList>
            <person name="Engel E."/>
            <person name="Viargues P."/>
            <person name="Mortier M."/>
            <person name="Taillebourg E."/>
            <person name="Coute Y."/>
            <person name="Thevenon D."/>
            <person name="Fauvarque M.O."/>
        </authorList>
    </citation>
    <scope>FUNCTION</scope>
</reference>
<gene>
    <name type="primary">scny</name>
    <name type="synonym">Usp36</name>
    <name type="ORF">CG5505</name>
</gene>
<proteinExistence type="evidence at protein level"/>
<name>UBP36_DROME</name>
<sequence>MPVSMAVCETANVVNAALRESLGGNSSAGSSTDQAKSGEDTNGSLQNHIVANAKRILMAKIEYEEVPNYHESVLENLKSKYIVIKPGNPGAINGFSGKNNTGKLVGANGHDNNGARKQAEHPNNQSHHINHHNHQHPTSNPNELPKPKRVLYPRENIRIGWKQSERKWQVGTGMINVGNTCYLNSTLQALLHIPALANWLVSEQAHLADCNVAEPGSGCIICAMTKTLLATQSNQSAVRPFLIYSKLKQICKHMVVGRQEDAHEFLRFLVEAMERAYLMRFRNYKELDQLVKETTPLGQIFGGYLRSEVRCLSCNHVSITFQHFQDLLLDIRKADSLEDAFEGHFSRERLEDMGYKCEGCKKKVSATKQFSLERAPITLCIQLKRFSMIGNKLTKQISFKSRIDLSKYAARSQAAQAQPLTYRLVSMVTHLGASQHCGHYTAIGSTDTGSFYNFDDSYVRPIAMHSVCNTNAYIMFFELDLSQAASPAANRPNGVRLTNGHSTTPVPAATVSSPSPTRFIGPQLPAGGANGYTNGNAQKTAIQFKQQNQQSPQNGLQLGTGKFQDTAKPPLVGAHAKGEATSAPTANGNKSSSPSSNSSSNHKSINQQQYLPISSDDEDIEDEMKPRPTTAQLPSMPNMTENHTEPKAKSPVKIQVKTPVKTPLKSLVPYESASEEEEAPLPNPRKRPSGEDSSESDQESGQTNGHSKTNGSHTNGSASSSVHVNNSKQKTDAIDEIFKSLKKSADSDEDDDEEEPSIQLTNGWHPQKQSQSQSKAPPSPKTPPSPAVIKSKTGIWKVTRNDEVDAIEDDVDVVVVEGSPVKIPTPNKNHRNPFSSSKPSTDSPATPGAKRQKLLNGSALKSHQQPRVGNGYQSNATSNGSTINELLKQSYRGYGSPVLSWNGKPAELEKELLVDAREQRQRDIDDDEENEMDRGRQRKVKSGSAKGNNASNSTPGYNPFQEYEGQKRWNKNGGGGGFPRFYNQNYRQNFQQRNKFKFNRFGGPGSAKFQQQRALQRHLSAGGGFSRRQPSAQQQQQT</sequence>
<dbReference type="EC" id="3.4.19.12"/>
<dbReference type="EMBL" id="AE014296">
    <property type="protein sequence ID" value="AAN12107.1"/>
    <property type="molecule type" value="Genomic_DNA"/>
</dbReference>
<dbReference type="EMBL" id="AE014296">
    <property type="protein sequence ID" value="AAN12108.2"/>
    <property type="molecule type" value="Genomic_DNA"/>
</dbReference>
<dbReference type="EMBL" id="AE014296">
    <property type="protein sequence ID" value="AAN12109.1"/>
    <property type="molecule type" value="Genomic_DNA"/>
</dbReference>
<dbReference type="EMBL" id="AE014296">
    <property type="protein sequence ID" value="AAN12110.2"/>
    <property type="molecule type" value="Genomic_DNA"/>
</dbReference>
<dbReference type="EMBL" id="AE014296">
    <property type="protein sequence ID" value="AAN12111.1"/>
    <property type="molecule type" value="Genomic_DNA"/>
</dbReference>
<dbReference type="EMBL" id="AE014296">
    <property type="protein sequence ID" value="AFH04310.1"/>
    <property type="molecule type" value="Genomic_DNA"/>
</dbReference>
<dbReference type="EMBL" id="AE014296">
    <property type="protein sequence ID" value="AFH04311.1"/>
    <property type="molecule type" value="Genomic_DNA"/>
</dbReference>
<dbReference type="EMBL" id="AY051916">
    <property type="protein sequence ID" value="AAK93340.1"/>
    <property type="molecule type" value="mRNA"/>
</dbReference>
<dbReference type="EMBL" id="BT004507">
    <property type="protein sequence ID" value="AAO42671.1"/>
    <property type="molecule type" value="mRNA"/>
</dbReference>
<dbReference type="EMBL" id="BT010120">
    <property type="protein sequence ID" value="AAQ22589.1"/>
    <property type="molecule type" value="mRNA"/>
</dbReference>
<dbReference type="EMBL" id="BT046169">
    <property type="protein sequence ID" value="ACI47091.1"/>
    <property type="molecule type" value="mRNA"/>
</dbReference>
<dbReference type="RefSeq" id="NP_001246639.1">
    <molecule id="Q9VRP5-7"/>
    <property type="nucleotide sequence ID" value="NM_001259710.2"/>
</dbReference>
<dbReference type="RefSeq" id="NP_001246640.1">
    <molecule id="Q9VRP5-7"/>
    <property type="nucleotide sequence ID" value="NM_001259711.2"/>
</dbReference>
<dbReference type="RefSeq" id="NP_647986.3">
    <molecule id="Q9VRP5-9"/>
    <property type="nucleotide sequence ID" value="NM_139729.3"/>
</dbReference>
<dbReference type="RefSeq" id="NP_729092.1">
    <molecule id="Q9VRP5-3"/>
    <property type="nucleotide sequence ID" value="NM_168132.3"/>
</dbReference>
<dbReference type="RefSeq" id="NP_729093.2">
    <molecule id="Q9VRP5-8"/>
    <property type="nucleotide sequence ID" value="NM_168133.2"/>
</dbReference>
<dbReference type="RefSeq" id="NP_729094.1">
    <molecule id="Q9VRP5-6"/>
    <property type="nucleotide sequence ID" value="NM_168134.2"/>
</dbReference>
<dbReference type="RefSeq" id="NP_729095.1">
    <molecule id="Q9VRP5-2"/>
    <property type="nucleotide sequence ID" value="NM_168135.2"/>
</dbReference>
<dbReference type="SMR" id="Q9VRP5"/>
<dbReference type="BioGRID" id="64109">
    <property type="interactions" value="14"/>
</dbReference>
<dbReference type="FunCoup" id="Q9VRP5">
    <property type="interactions" value="540"/>
</dbReference>
<dbReference type="IntAct" id="Q9VRP5">
    <property type="interactions" value="99"/>
</dbReference>
<dbReference type="STRING" id="7227.FBpp0076806"/>
<dbReference type="MEROPS" id="C19.097"/>
<dbReference type="GlyGen" id="Q9VRP5">
    <property type="glycosylation" value="2 sites"/>
</dbReference>
<dbReference type="iPTMnet" id="Q9VRP5"/>
<dbReference type="PaxDb" id="7227-FBpp0076806"/>
<dbReference type="DNASU" id="38648"/>
<dbReference type="EnsemblMetazoa" id="FBtr0077100">
    <molecule id="Q9VRP5-3"/>
    <property type="protein sequence ID" value="FBpp0076806"/>
    <property type="gene ID" value="FBgn0260936"/>
</dbReference>
<dbReference type="EnsemblMetazoa" id="FBtr0077101">
    <molecule id="Q9VRP5-2"/>
    <property type="protein sequence ID" value="FBpp0076807"/>
    <property type="gene ID" value="FBgn0260936"/>
</dbReference>
<dbReference type="EnsemblMetazoa" id="FBtr0077103">
    <molecule id="Q9VRP5-6"/>
    <property type="protein sequence ID" value="FBpp0076809"/>
    <property type="gene ID" value="FBgn0260936"/>
</dbReference>
<dbReference type="EnsemblMetazoa" id="FBtr0307975">
    <molecule id="Q9VRP5-7"/>
    <property type="protein sequence ID" value="FBpp0300344"/>
    <property type="gene ID" value="FBgn0260936"/>
</dbReference>
<dbReference type="EnsemblMetazoa" id="FBtr0307976">
    <molecule id="Q9VRP5-7"/>
    <property type="protein sequence ID" value="FBpp0300345"/>
    <property type="gene ID" value="FBgn0260936"/>
</dbReference>
<dbReference type="EnsemblMetazoa" id="FBtr0330127">
    <molecule id="Q9VRP5-8"/>
    <property type="protein sequence ID" value="FBpp0303160"/>
    <property type="gene ID" value="FBgn0260936"/>
</dbReference>
<dbReference type="EnsemblMetazoa" id="FBtr0330128">
    <molecule id="Q9VRP5-9"/>
    <property type="protein sequence ID" value="FBpp0303161"/>
    <property type="gene ID" value="FBgn0260936"/>
</dbReference>
<dbReference type="GeneID" id="38648"/>
<dbReference type="KEGG" id="dme:Dmel_CG5505"/>
<dbReference type="AGR" id="FB:FBgn0260936"/>
<dbReference type="CTD" id="38648"/>
<dbReference type="FlyBase" id="FBgn0260936">
    <property type="gene designation" value="scny"/>
</dbReference>
<dbReference type="VEuPathDB" id="VectorBase:FBgn0260936"/>
<dbReference type="eggNOG" id="KOG1865">
    <property type="taxonomic scope" value="Eukaryota"/>
</dbReference>
<dbReference type="GeneTree" id="ENSGT00940000170426"/>
<dbReference type="HOGENOM" id="CLU_006208_0_0_1"/>
<dbReference type="InParanoid" id="Q9VRP5"/>
<dbReference type="OMA" id="VCAMAKT"/>
<dbReference type="OrthoDB" id="420187at2759"/>
<dbReference type="PhylomeDB" id="Q9VRP5"/>
<dbReference type="Reactome" id="R-DME-5689880">
    <property type="pathway name" value="Ub-specific processing proteases"/>
</dbReference>
<dbReference type="Reactome" id="R-DME-9648002">
    <property type="pathway name" value="RAS processing"/>
</dbReference>
<dbReference type="SignaLink" id="Q9VRP5"/>
<dbReference type="BioGRID-ORCS" id="38648">
    <property type="hits" value="2 hits in 3 CRISPR screens"/>
</dbReference>
<dbReference type="ChiTaRS" id="scny">
    <property type="organism name" value="fly"/>
</dbReference>
<dbReference type="GenomeRNAi" id="38648"/>
<dbReference type="PRO" id="PR:Q9VRP5"/>
<dbReference type="Proteomes" id="UP000000803">
    <property type="component" value="Chromosome 3L"/>
</dbReference>
<dbReference type="Bgee" id="FBgn0260936">
    <property type="expression patterns" value="Expressed in adult oenocyte (Drosophila) in body wall and 212 other cell types or tissues"/>
</dbReference>
<dbReference type="GO" id="GO:0005829">
    <property type="term" value="C:cytosol"/>
    <property type="evidence" value="ECO:0000318"/>
    <property type="project" value="GO_Central"/>
</dbReference>
<dbReference type="GO" id="GO:0005730">
    <property type="term" value="C:nucleolus"/>
    <property type="evidence" value="ECO:0000314"/>
    <property type="project" value="UniProtKB"/>
</dbReference>
<dbReference type="GO" id="GO:0005654">
    <property type="term" value="C:nucleoplasm"/>
    <property type="evidence" value="ECO:0007005"/>
    <property type="project" value="FlyBase"/>
</dbReference>
<dbReference type="GO" id="GO:0005634">
    <property type="term" value="C:nucleus"/>
    <property type="evidence" value="ECO:0000314"/>
    <property type="project" value="FlyBase"/>
</dbReference>
<dbReference type="GO" id="GO:0004843">
    <property type="term" value="F:cysteine-type deubiquitinase activity"/>
    <property type="evidence" value="ECO:0000314"/>
    <property type="project" value="FlyBase"/>
</dbReference>
<dbReference type="GO" id="GO:0061578">
    <property type="term" value="F:K63-linked deubiquitinase activity"/>
    <property type="evidence" value="ECO:0000314"/>
    <property type="project" value="FlyBase"/>
</dbReference>
<dbReference type="GO" id="GO:0030718">
    <property type="term" value="P:germ-line stem cell population maintenance"/>
    <property type="evidence" value="ECO:0000315"/>
    <property type="project" value="UniProtKB"/>
</dbReference>
<dbReference type="GO" id="GO:0031507">
    <property type="term" value="P:heterochromatin formation"/>
    <property type="evidence" value="ECO:0000315"/>
    <property type="project" value="FlyBase"/>
</dbReference>
<dbReference type="GO" id="GO:0002785">
    <property type="term" value="P:negative regulation of antimicrobial peptide production"/>
    <property type="evidence" value="ECO:0000315"/>
    <property type="project" value="FlyBase"/>
</dbReference>
<dbReference type="GO" id="GO:0045824">
    <property type="term" value="P:negative regulation of innate immune response"/>
    <property type="evidence" value="ECO:0000315"/>
    <property type="project" value="FlyBase"/>
</dbReference>
<dbReference type="GO" id="GO:0016242">
    <property type="term" value="P:negative regulation of macroautophagy"/>
    <property type="evidence" value="ECO:0000315"/>
    <property type="project" value="UniProtKB"/>
</dbReference>
<dbReference type="GO" id="GO:0061060">
    <property type="term" value="P:negative regulation of peptidoglycan recognition protein signaling pathway"/>
    <property type="evidence" value="ECO:0000315"/>
    <property type="project" value="FlyBase"/>
</dbReference>
<dbReference type="GO" id="GO:1901800">
    <property type="term" value="P:positive regulation of proteasomal protein catabolic process"/>
    <property type="evidence" value="ECO:0000315"/>
    <property type="project" value="FlyBase"/>
</dbReference>
<dbReference type="GO" id="GO:0016579">
    <property type="term" value="P:protein deubiquitination"/>
    <property type="evidence" value="ECO:0000315"/>
    <property type="project" value="UniProtKB"/>
</dbReference>
<dbReference type="GO" id="GO:0006508">
    <property type="term" value="P:proteolysis"/>
    <property type="evidence" value="ECO:0007669"/>
    <property type="project" value="UniProtKB-KW"/>
</dbReference>
<dbReference type="GO" id="GO:0042981">
    <property type="term" value="P:regulation of apoptotic process"/>
    <property type="evidence" value="ECO:0000315"/>
    <property type="project" value="FlyBase"/>
</dbReference>
<dbReference type="GO" id="GO:0031647">
    <property type="term" value="P:regulation of protein stability"/>
    <property type="evidence" value="ECO:0000318"/>
    <property type="project" value="GO_Central"/>
</dbReference>
<dbReference type="GO" id="GO:0035019">
    <property type="term" value="P:somatic stem cell population maintenance"/>
    <property type="evidence" value="ECO:0000315"/>
    <property type="project" value="UniProtKB"/>
</dbReference>
<dbReference type="CDD" id="cd02661">
    <property type="entry name" value="Peptidase_C19E"/>
    <property type="match status" value="1"/>
</dbReference>
<dbReference type="FunFam" id="3.90.70.10:FF:000085">
    <property type="entry name" value="Ubiquitin carboxyl-terminal hydrolase 36"/>
    <property type="match status" value="1"/>
</dbReference>
<dbReference type="Gene3D" id="3.90.70.10">
    <property type="entry name" value="Cysteine proteinases"/>
    <property type="match status" value="1"/>
</dbReference>
<dbReference type="InterPro" id="IPR038765">
    <property type="entry name" value="Papain-like_cys_pep_sf"/>
</dbReference>
<dbReference type="InterPro" id="IPR050164">
    <property type="entry name" value="Peptidase_C19"/>
</dbReference>
<dbReference type="InterPro" id="IPR001394">
    <property type="entry name" value="Peptidase_C19_UCH"/>
</dbReference>
<dbReference type="InterPro" id="IPR018200">
    <property type="entry name" value="USP_CS"/>
</dbReference>
<dbReference type="InterPro" id="IPR028889">
    <property type="entry name" value="USP_dom"/>
</dbReference>
<dbReference type="PANTHER" id="PTHR24006">
    <property type="entry name" value="UBIQUITIN CARBOXYL-TERMINAL HYDROLASE"/>
    <property type="match status" value="1"/>
</dbReference>
<dbReference type="PANTHER" id="PTHR24006:SF758">
    <property type="entry name" value="UBIQUITIN CARBOXYL-TERMINAL HYDROLASE 36"/>
    <property type="match status" value="1"/>
</dbReference>
<dbReference type="Pfam" id="PF00443">
    <property type="entry name" value="UCH"/>
    <property type="match status" value="1"/>
</dbReference>
<dbReference type="SUPFAM" id="SSF54001">
    <property type="entry name" value="Cysteine proteinases"/>
    <property type="match status" value="1"/>
</dbReference>
<dbReference type="PROSITE" id="PS00972">
    <property type="entry name" value="USP_1"/>
    <property type="match status" value="1"/>
</dbReference>
<dbReference type="PROSITE" id="PS00973">
    <property type="entry name" value="USP_2"/>
    <property type="match status" value="1"/>
</dbReference>
<dbReference type="PROSITE" id="PS50235">
    <property type="entry name" value="USP_3"/>
    <property type="match status" value="1"/>
</dbReference>
<accession>Q9VRP5</accession>
<accession>M9NE30</accession>
<accession>Q7YTX7</accession>
<accession>Q86NM9</accession>
<accession>Q8IQ57</accession>
<accession>Q8IQ58</accession>
<accession>Q8IQ59</accession>
<accession>Q8IQ60</accession>
<accession>Q960Q4</accession>
<comment type="function">
    <text evidence="6 7 8 9">Hydrolase that deubiquitinates polyubiquitinated target proteins including imd (PubMed:19039105, PubMed:19837371). Required for preventing the constitutive activation of the imd/NF-kappa-B (Imd) signaling cascade under unchalleneged conditions (PubMed:19837371, PubMed:25027767). Deubiquitinates imd linked 'Lys-63' chains which leads its proteasomal degradation and consequently down-regulation of the Imd signaling cascade (PubMed:19837371). Removal of the activating 'Lys-63'-linked chains is likely to enable their replacement with 'Lys-48'-linked chains which act as 'tags' the for proteasomal degradation of imd (PubMed:19837371). Required for maintaining multiple types of adult stem cells, including male and female germline, epithelial follicle cell and intestinal stem cells (PubMed:19039105). May function as a transcriptional repressor by continually deubiquiting histone H2B at the promoters of genes critical for cellular differentiation, thereby preventing histone H3 'Lys-4' trimethylation (H3K4me3) (PubMed:19039105). Controls selective autophagy activation by ubiquitinated proteins (PubMed:22622177).</text>
</comment>
<comment type="catalytic activity">
    <reaction>
        <text>Thiol-dependent hydrolysis of ester, thioester, amide, peptide and isopeptide bonds formed by the C-terminal Gly of ubiquitin (a 76-residue protein attached to proteins as an intracellular targeting signal).</text>
        <dbReference type="EC" id="3.4.19.12"/>
    </reaction>
</comment>
<comment type="subunit">
    <text evidence="6 7">Interacts with atms/PAF1, but not with CycT (PubMed:19039105). Interacts (via C-terminus) with imd (via N-terminus) (PubMed:19837371).</text>
</comment>
<comment type="subcellular location">
    <subcellularLocation>
        <location evidence="6">Nucleus</location>
        <location evidence="6">Nucleolus</location>
    </subcellularLocation>
    <subcellularLocation>
        <location evidence="7">Cytoplasm</location>
    </subcellularLocation>
</comment>
<comment type="alternative products">
    <event type="alternative splicing"/>
    <isoform>
        <id>Q9VRP5-3</id>
        <name>D</name>
        <sequence type="displayed"/>
    </isoform>
    <isoform>
        <id>Q9VRP5-2</id>
        <name>B</name>
        <sequence type="described" ref="VSP_037591 VSP_037592"/>
    </isoform>
    <isoform>
        <id>Q9VRP5-6</id>
        <name>C</name>
        <sequence type="described" ref="VSP_037590 VSP_037593"/>
    </isoform>
    <isoform>
        <id>Q9VRP5-7</id>
        <name>G</name>
        <name>H</name>
        <sequence type="described" ref="VSP_054032"/>
    </isoform>
    <isoform>
        <id>Q9VRP5-8</id>
        <name>I</name>
        <sequence type="described" ref="VSP_037590 VSP_037593 VSP_054032"/>
    </isoform>
    <isoform>
        <id>Q9VRP5-9</id>
        <name>J</name>
        <sequence type="described" ref="VSP_037591 VSP_037592 VSP_054032"/>
    </isoform>
</comment>
<comment type="disruption phenotype">
    <text evidence="7 8">Mutants are lethal at larval stages (PubMed:19837371, PubMed:22622177). They are significantly smaller without gross morphological defects and die 5 days after egg laying (PubMed:22622177). Cells show accumulation of ubiquitinated proteins in both the nucleus and the cytoplasm, forming dense dots (PubMed:22622177). Double mutants for ref(2)P and scny die 96 hours after egg laying (PubMed:22622177). RNAi-mediated knockdown is also larval lethal (PubMed:19837371). RNAi-mediated knockdown in the fat body or gut of uninfected adults, results in a significant increase in the expression of the antimicrobial peptide genes Dpt, AttA and puc (PubMed:19837371). Adults raised under axenic conditions do not display any increase in Dpt, AttA and puc expression (PubMed:19837371). No significant increase in the expression of the antifungal peptide gene Drs (PubMed:19837371). Double knockdown with imd in the adult fat body, prevents the enhanced expression of Dpt in uninfected flies (PubMed:19837371).</text>
</comment>
<comment type="similarity">
    <text evidence="12">Belongs to the peptidase C19 family.</text>
</comment>